<keyword id="KW-1185">Reference proteome</keyword>
<keyword id="KW-0687">Ribonucleoprotein</keyword>
<keyword id="KW-0689">Ribosomal protein</keyword>
<keyword id="KW-0694">RNA-binding</keyword>
<keyword id="KW-0699">rRNA-binding</keyword>
<keyword id="KW-0820">tRNA-binding</keyword>
<sequence length="193" mass="21559">MTETLETPASKIVPRLKTKYADSIKSTLIEEFKYENVNQVPRLVKVVVNMGVGDAAKDSKLIDGAVRDLTLITGQKPQVTKARKSIAQFKLREGMPIGAHATLRGDRMWEFLDRLVTLALPRIRDFRGLSGKQFDGNGNYTFGLTEQVMFHEIDQDSIDRVRGMDITVVTTAKTDDEGRALLKALGFPFKTEA</sequence>
<evidence type="ECO:0000255" key="1">
    <source>
        <dbReference type="HAMAP-Rule" id="MF_01333"/>
    </source>
</evidence>
<evidence type="ECO:0000305" key="2"/>
<dbReference type="EMBL" id="CP000454">
    <property type="protein sequence ID" value="ABK04342.1"/>
    <property type="molecule type" value="Genomic_DNA"/>
</dbReference>
<dbReference type="RefSeq" id="WP_011692799.1">
    <property type="nucleotide sequence ID" value="NC_008541.1"/>
</dbReference>
<dbReference type="SMR" id="A0JZ72"/>
<dbReference type="STRING" id="290399.Arth_2963"/>
<dbReference type="KEGG" id="art:Arth_2963"/>
<dbReference type="eggNOG" id="COG0094">
    <property type="taxonomic scope" value="Bacteria"/>
</dbReference>
<dbReference type="HOGENOM" id="CLU_061015_2_1_11"/>
<dbReference type="OrthoDB" id="9806626at2"/>
<dbReference type="Proteomes" id="UP000000754">
    <property type="component" value="Chromosome"/>
</dbReference>
<dbReference type="GO" id="GO:1990904">
    <property type="term" value="C:ribonucleoprotein complex"/>
    <property type="evidence" value="ECO:0007669"/>
    <property type="project" value="UniProtKB-KW"/>
</dbReference>
<dbReference type="GO" id="GO:0005840">
    <property type="term" value="C:ribosome"/>
    <property type="evidence" value="ECO:0007669"/>
    <property type="project" value="UniProtKB-KW"/>
</dbReference>
<dbReference type="GO" id="GO:0019843">
    <property type="term" value="F:rRNA binding"/>
    <property type="evidence" value="ECO:0007669"/>
    <property type="project" value="UniProtKB-UniRule"/>
</dbReference>
<dbReference type="GO" id="GO:0003735">
    <property type="term" value="F:structural constituent of ribosome"/>
    <property type="evidence" value="ECO:0007669"/>
    <property type="project" value="InterPro"/>
</dbReference>
<dbReference type="GO" id="GO:0000049">
    <property type="term" value="F:tRNA binding"/>
    <property type="evidence" value="ECO:0007669"/>
    <property type="project" value="UniProtKB-UniRule"/>
</dbReference>
<dbReference type="GO" id="GO:0006412">
    <property type="term" value="P:translation"/>
    <property type="evidence" value="ECO:0007669"/>
    <property type="project" value="UniProtKB-UniRule"/>
</dbReference>
<dbReference type="FunFam" id="3.30.1440.10:FF:000001">
    <property type="entry name" value="50S ribosomal protein L5"/>
    <property type="match status" value="1"/>
</dbReference>
<dbReference type="Gene3D" id="3.30.1440.10">
    <property type="match status" value="1"/>
</dbReference>
<dbReference type="HAMAP" id="MF_01333_B">
    <property type="entry name" value="Ribosomal_uL5_B"/>
    <property type="match status" value="1"/>
</dbReference>
<dbReference type="InterPro" id="IPR002132">
    <property type="entry name" value="Ribosomal_uL5"/>
</dbReference>
<dbReference type="InterPro" id="IPR020930">
    <property type="entry name" value="Ribosomal_uL5_bac-type"/>
</dbReference>
<dbReference type="InterPro" id="IPR031309">
    <property type="entry name" value="Ribosomal_uL5_C"/>
</dbReference>
<dbReference type="InterPro" id="IPR022803">
    <property type="entry name" value="Ribosomal_uL5_dom_sf"/>
</dbReference>
<dbReference type="InterPro" id="IPR031310">
    <property type="entry name" value="Ribosomal_uL5_N"/>
</dbReference>
<dbReference type="NCBIfam" id="NF000585">
    <property type="entry name" value="PRK00010.1"/>
    <property type="match status" value="1"/>
</dbReference>
<dbReference type="PANTHER" id="PTHR11994">
    <property type="entry name" value="60S RIBOSOMAL PROTEIN L11-RELATED"/>
    <property type="match status" value="1"/>
</dbReference>
<dbReference type="Pfam" id="PF00281">
    <property type="entry name" value="Ribosomal_L5"/>
    <property type="match status" value="1"/>
</dbReference>
<dbReference type="Pfam" id="PF00673">
    <property type="entry name" value="Ribosomal_L5_C"/>
    <property type="match status" value="1"/>
</dbReference>
<dbReference type="PIRSF" id="PIRSF002161">
    <property type="entry name" value="Ribosomal_L5"/>
    <property type="match status" value="1"/>
</dbReference>
<dbReference type="SUPFAM" id="SSF55282">
    <property type="entry name" value="RL5-like"/>
    <property type="match status" value="1"/>
</dbReference>
<name>RL5_ARTS2</name>
<proteinExistence type="inferred from homology"/>
<gene>
    <name evidence="1" type="primary">rplE</name>
    <name type="ordered locus">Arth_2963</name>
</gene>
<accession>A0JZ72</accession>
<reference key="1">
    <citation type="journal article" date="2013" name="Stand. Genomic Sci.">
        <title>Complete genome sequence of Arthrobacter sp. strain FB24.</title>
        <authorList>
            <person name="Nakatsu C.H."/>
            <person name="Barabote R."/>
            <person name="Thompson S."/>
            <person name="Bruce D."/>
            <person name="Detter C."/>
            <person name="Brettin T."/>
            <person name="Han C."/>
            <person name="Beasley F."/>
            <person name="Chen W."/>
            <person name="Konopka A."/>
            <person name="Xie G."/>
        </authorList>
    </citation>
    <scope>NUCLEOTIDE SEQUENCE [LARGE SCALE GENOMIC DNA]</scope>
    <source>
        <strain>FB24</strain>
    </source>
</reference>
<feature type="chain" id="PRO_1000166107" description="Large ribosomal subunit protein uL5">
    <location>
        <begin position="1"/>
        <end position="193"/>
    </location>
</feature>
<comment type="function">
    <text evidence="1">This is one of the proteins that bind and probably mediate the attachment of the 5S RNA into the large ribosomal subunit, where it forms part of the central protuberance. In the 70S ribosome it contacts protein S13 of the 30S subunit (bridge B1b), connecting the 2 subunits; this bridge is implicated in subunit movement. Contacts the P site tRNA; the 5S rRNA and some of its associated proteins might help stabilize positioning of ribosome-bound tRNAs.</text>
</comment>
<comment type="subunit">
    <text evidence="1">Part of the 50S ribosomal subunit; part of the 5S rRNA/L5/L18/L25 subcomplex. Contacts the 5S rRNA and the P site tRNA. Forms a bridge to the 30S subunit in the 70S ribosome.</text>
</comment>
<comment type="similarity">
    <text evidence="1">Belongs to the universal ribosomal protein uL5 family.</text>
</comment>
<organism>
    <name type="scientific">Arthrobacter sp. (strain FB24)</name>
    <dbReference type="NCBI Taxonomy" id="290399"/>
    <lineage>
        <taxon>Bacteria</taxon>
        <taxon>Bacillati</taxon>
        <taxon>Actinomycetota</taxon>
        <taxon>Actinomycetes</taxon>
        <taxon>Micrococcales</taxon>
        <taxon>Micrococcaceae</taxon>
        <taxon>Arthrobacter</taxon>
    </lineage>
</organism>
<protein>
    <recommendedName>
        <fullName evidence="1">Large ribosomal subunit protein uL5</fullName>
    </recommendedName>
    <alternativeName>
        <fullName evidence="2">50S ribosomal protein L5</fullName>
    </alternativeName>
</protein>